<organism>
    <name type="scientific">Homo sapiens</name>
    <name type="common">Human</name>
    <dbReference type="NCBI Taxonomy" id="9606"/>
    <lineage>
        <taxon>Eukaryota</taxon>
        <taxon>Metazoa</taxon>
        <taxon>Chordata</taxon>
        <taxon>Craniata</taxon>
        <taxon>Vertebrata</taxon>
        <taxon>Euteleostomi</taxon>
        <taxon>Mammalia</taxon>
        <taxon>Eutheria</taxon>
        <taxon>Euarchontoglires</taxon>
        <taxon>Primates</taxon>
        <taxon>Haplorrhini</taxon>
        <taxon>Catarrhini</taxon>
        <taxon>Hominidae</taxon>
        <taxon>Homo</taxon>
    </lineage>
</organism>
<comment type="function">
    <text>The products of the Gag polyproteins of infectious retroviruses perform highly complex orchestrated tasks during the assembly, budding, maturation, and infection stages of the viral replication cycle. During viral assembly, the proteins form membrane associations and self-associations that ultimately result in budding of an immature virion from the infected cell. Gag precursors also function during viral assembly to selectively bind and package two plus strands of genomic RNA. Endogenous Gag proteins may have kept, lost or modified their original function during evolution.</text>
</comment>
<comment type="subcellular location">
    <subcellularLocation>
        <location>Cell membrane</location>
        <topology>Lipid-anchor</topology>
    </subcellularLocation>
    <text evidence="1">Cytoplasmic membrane (in a transfection system).</text>
</comment>
<comment type="alternative products">
    <event type="ribosomal frameshifting"/>
    <isoform>
        <id>P63126-1</id>
        <name>2</name>
        <sequence type="displayed"/>
    </isoform>
    <isoform>
        <id>P63128-1</id>
        <name>1</name>
        <sequence type="external"/>
    </isoform>
    <text>This protein is synthesized as a Gag polypeptide and as a Gag-Pro-Pol polyprotein. The later is the precursor of the Pro and Pol proteins. It is thought, by similarity with type-B retroviruses, to be generated by -1 frameshifts occurring at the Gag-Pro and Pro-Pol genes boundaries.</text>
</comment>
<comment type="domain">
    <text>HERV-K Gag polyprotein contains regions homologous to the matrix (MA), capsid (CA) and nucleocapsid (NC) proteins from infectious retroviruses. Evidence suggests that HERV-K(HML-2) Gag polyprotein can be cleaved into mature MA, CA and NC under certain circumstances. However, the exact boundaries as well as the size of processed Gag proteins have not been precisely determined yet.</text>
</comment>
<comment type="PTM">
    <text evidence="1">Myristoylation is essential for retroviral assembly. Alteration of the glycine residue leads to a block in the budding of particles and an accumulation of Gag inside the cell (By similarity).</text>
</comment>
<comment type="PTM">
    <text evidence="5">Specific enzymatic cleavages may yield mature proteins.</text>
</comment>
<comment type="miscellaneous">
    <text>This Gag protein is encoded by a human specific provirus.</text>
</comment>
<comment type="miscellaneous">
    <molecule>Isoform 2</molecule>
    <text>Gag-Pro polyprotein is produced from conventional translation of the gag ORF.</text>
</comment>
<comment type="similarity">
    <text evidence="5">Belongs to the beta type-B retroviral Gag protein family. HERV class-II K(HML-2) gag subfamily.</text>
</comment>
<comment type="sequence caution" evidence="5">
    <conflict type="frameshift">
        <sequence resource="EMBL-CDS" id="AAD51799"/>
    </conflict>
    <text>The frameshift occurs probably within the codons for the last amino acids in the Gag and Pro open reading frames.</text>
</comment>
<gene>
    <name type="primary">ERVK-9</name>
</gene>
<proteinExistence type="evidence at protein level"/>
<protein>
    <recommendedName>
        <fullName>Endogenous retrovirus group K member 9 Gag polyprotein</fullName>
    </recommendedName>
    <alternativeName>
        <fullName>HERV-K(C6) Gag protein</fullName>
    </alternativeName>
    <alternativeName>
        <fullName>HERV-K109 Gag protein</fullName>
    </alternativeName>
    <alternativeName>
        <fullName>HERV-K_6q14.1 provirus ancestral Gag polyprotein</fullName>
        <shortName>Gag polyprotein</shortName>
    </alternativeName>
</protein>
<feature type="initiator methionine" description="Removed" evidence="2">
    <location>
        <position position="1"/>
    </location>
</feature>
<feature type="chain" id="PRO_0000186747" description="Endogenous retrovirus group K member 9 Gag polyprotein">
    <location>
        <begin position="2"/>
        <end position="666"/>
    </location>
</feature>
<feature type="zinc finger region" description="CCHC-type 1" evidence="3">
    <location>
        <begin position="544"/>
        <end position="561"/>
    </location>
</feature>
<feature type="zinc finger region" description="CCHC-type 2" evidence="3">
    <location>
        <begin position="580"/>
        <end position="597"/>
    </location>
</feature>
<feature type="region of interest" description="Disordered" evidence="4">
    <location>
        <begin position="165"/>
        <end position="264"/>
    </location>
</feature>
<feature type="region of interest" description="Disordered" evidence="4">
    <location>
        <begin position="598"/>
        <end position="641"/>
    </location>
</feature>
<feature type="compositionally biased region" description="Pro residues" evidence="4">
    <location>
        <begin position="232"/>
        <end position="247"/>
    </location>
</feature>
<feature type="compositionally biased region" description="Polar residues" evidence="4">
    <location>
        <begin position="604"/>
        <end position="622"/>
    </location>
</feature>
<feature type="compositionally biased region" description="Low complexity" evidence="4">
    <location>
        <begin position="624"/>
        <end position="640"/>
    </location>
</feature>
<feature type="lipid moiety-binding region" description="N-myristoyl glycine" evidence="2">
    <location>
        <position position="2"/>
    </location>
</feature>
<dbReference type="EMBL" id="AF164615">
    <property type="protein sequence ID" value="AAD51799.1"/>
    <property type="status" value="ALT_SEQ"/>
    <property type="molecule type" value="Genomic_DNA"/>
</dbReference>
<dbReference type="SMR" id="P63126"/>
<dbReference type="BioMuta" id="HGNC:39005"/>
<dbReference type="DMDM" id="52000663"/>
<dbReference type="jPOST" id="P63126"/>
<dbReference type="MassIVE" id="P63126"/>
<dbReference type="PeptideAtlas" id="P63126"/>
<dbReference type="GeneCards" id="ERVK-9"/>
<dbReference type="HGNC" id="HGNC:39005">
    <property type="gene designation" value="ERVK-9"/>
</dbReference>
<dbReference type="neXtProt" id="NX_P63126"/>
<dbReference type="PhylomeDB" id="P63126"/>
<dbReference type="Pharos" id="P63126">
    <property type="development level" value="Tdark"/>
</dbReference>
<dbReference type="Proteomes" id="UP000005640">
    <property type="component" value="Unplaced"/>
</dbReference>
<dbReference type="GO" id="GO:0005886">
    <property type="term" value="C:plasma membrane"/>
    <property type="evidence" value="ECO:0007669"/>
    <property type="project" value="UniProtKB-SubCell"/>
</dbReference>
<dbReference type="GO" id="GO:0003676">
    <property type="term" value="F:nucleic acid binding"/>
    <property type="evidence" value="ECO:0007669"/>
    <property type="project" value="InterPro"/>
</dbReference>
<dbReference type="GO" id="GO:0005198">
    <property type="term" value="F:structural molecule activity"/>
    <property type="evidence" value="ECO:0007669"/>
    <property type="project" value="InterPro"/>
</dbReference>
<dbReference type="GO" id="GO:0008270">
    <property type="term" value="F:zinc ion binding"/>
    <property type="evidence" value="ECO:0007669"/>
    <property type="project" value="UniProtKB-KW"/>
</dbReference>
<dbReference type="GO" id="GO:0075523">
    <property type="term" value="P:viral translational frameshifting"/>
    <property type="evidence" value="ECO:0007669"/>
    <property type="project" value="UniProtKB-KW"/>
</dbReference>
<dbReference type="Gene3D" id="1.10.1200.30">
    <property type="match status" value="1"/>
</dbReference>
<dbReference type="Gene3D" id="1.10.375.10">
    <property type="entry name" value="Human Immunodeficiency Virus Type 1 Capsid Protein"/>
    <property type="match status" value="1"/>
</dbReference>
<dbReference type="Gene3D" id="1.10.150.490">
    <property type="entry name" value="Retroviral GAG p10 protein"/>
    <property type="match status" value="1"/>
</dbReference>
<dbReference type="Gene3D" id="4.10.60.10">
    <property type="entry name" value="Zinc finger, CCHC-type"/>
    <property type="match status" value="1"/>
</dbReference>
<dbReference type="InterPro" id="IPR003322">
    <property type="entry name" value="B_retro_matrix"/>
</dbReference>
<dbReference type="InterPro" id="IPR038124">
    <property type="entry name" value="B_retro_matrix_sf"/>
</dbReference>
<dbReference type="InterPro" id="IPR045345">
    <property type="entry name" value="Gag_p24_C"/>
</dbReference>
<dbReference type="InterPro" id="IPR050195">
    <property type="entry name" value="Primate_lentivir_Gag_pol-like"/>
</dbReference>
<dbReference type="InterPro" id="IPR008916">
    <property type="entry name" value="Retrov_capsid_C"/>
</dbReference>
<dbReference type="InterPro" id="IPR008919">
    <property type="entry name" value="Retrov_capsid_N"/>
</dbReference>
<dbReference type="InterPro" id="IPR010999">
    <property type="entry name" value="Retrovr_matrix"/>
</dbReference>
<dbReference type="InterPro" id="IPR001878">
    <property type="entry name" value="Znf_CCHC"/>
</dbReference>
<dbReference type="InterPro" id="IPR036875">
    <property type="entry name" value="Znf_CCHC_sf"/>
</dbReference>
<dbReference type="PANTHER" id="PTHR40389">
    <property type="entry name" value="ENDOGENOUS RETROVIRUS GROUP K MEMBER 24 GAG POLYPROTEIN-RELATED"/>
    <property type="match status" value="1"/>
</dbReference>
<dbReference type="PANTHER" id="PTHR40389:SF2">
    <property type="entry name" value="ENDOGENOUS RETROVIRUS GROUP K MEMBER 24 GAG POLYPROTEIN-RELATED"/>
    <property type="match status" value="1"/>
</dbReference>
<dbReference type="Pfam" id="PF02337">
    <property type="entry name" value="Gag_p10"/>
    <property type="match status" value="1"/>
</dbReference>
<dbReference type="Pfam" id="PF00607">
    <property type="entry name" value="Gag_p24"/>
    <property type="match status" value="1"/>
</dbReference>
<dbReference type="Pfam" id="PF19317">
    <property type="entry name" value="Gag_p24_C"/>
    <property type="match status" value="1"/>
</dbReference>
<dbReference type="Pfam" id="PF00098">
    <property type="entry name" value="zf-CCHC"/>
    <property type="match status" value="1"/>
</dbReference>
<dbReference type="Pfam" id="PF14787">
    <property type="entry name" value="zf-CCHC_5"/>
    <property type="match status" value="1"/>
</dbReference>
<dbReference type="SMART" id="SM00343">
    <property type="entry name" value="ZnF_C2HC"/>
    <property type="match status" value="2"/>
</dbReference>
<dbReference type="SUPFAM" id="SSF47836">
    <property type="entry name" value="Retroviral matrix proteins"/>
    <property type="match status" value="1"/>
</dbReference>
<dbReference type="SUPFAM" id="SSF47353">
    <property type="entry name" value="Retrovirus capsid dimerization domain-like"/>
    <property type="match status" value="1"/>
</dbReference>
<dbReference type="SUPFAM" id="SSF47943">
    <property type="entry name" value="Retrovirus capsid protein, N-terminal core domain"/>
    <property type="match status" value="1"/>
</dbReference>
<dbReference type="SUPFAM" id="SSF57756">
    <property type="entry name" value="Retrovirus zinc finger-like domains"/>
    <property type="match status" value="2"/>
</dbReference>
<dbReference type="PROSITE" id="PS50158">
    <property type="entry name" value="ZF_CCHC"/>
    <property type="match status" value="1"/>
</dbReference>
<reference key="1">
    <citation type="journal article" date="1999" name="Curr. Biol.">
        <title>Many human endogenous retrovirus K (HERV-K) proviruses are unique to humans.</title>
        <authorList>
            <person name="Barbulescu M."/>
            <person name="Turner G."/>
            <person name="Seaman M.I."/>
            <person name="Deinard A.S."/>
            <person name="Kidd K.K."/>
            <person name="Lenz J."/>
        </authorList>
    </citation>
    <scope>NUCLEOTIDE SEQUENCE [GENOMIC DNA]</scope>
</reference>
<reference key="2">
    <citation type="journal article" date="1995" name="J. Virol.">
        <title>Human endogenous retrovirus K10: expression of Gag protein and detection of antibodies in patients with seminomas.</title>
        <authorList>
            <person name="Sauter M."/>
            <person name="Schommer S."/>
            <person name="Kremmer E."/>
            <person name="Remberger K."/>
            <person name="Doelken G."/>
            <person name="Lemm I."/>
            <person name="Buck M."/>
            <person name="Best B."/>
            <person name="Neumann-Haefelin D."/>
            <person name="Mueller-Lantzsch N."/>
        </authorList>
    </citation>
    <scope>CHARACTERIZATION</scope>
</reference>
<accession>P63126</accession>
<accession>Q9UKH4</accession>
<keyword id="KW-1003">Cell membrane</keyword>
<keyword id="KW-0895">ERV</keyword>
<keyword id="KW-0449">Lipoprotein</keyword>
<keyword id="KW-0472">Membrane</keyword>
<keyword id="KW-0479">Metal-binding</keyword>
<keyword id="KW-0519">Myristate</keyword>
<keyword id="KW-1185">Reference proteome</keyword>
<keyword id="KW-0677">Repeat</keyword>
<keyword id="KW-0688">Ribosomal frameshifting</keyword>
<keyword id="KW-0814">Transposable element</keyword>
<keyword id="KW-0862">Zinc</keyword>
<keyword id="KW-0863">Zinc-finger</keyword>
<name>GAK9_HUMAN</name>
<evidence type="ECO:0000250" key="1"/>
<evidence type="ECO:0000255" key="2"/>
<evidence type="ECO:0000255" key="3">
    <source>
        <dbReference type="PROSITE-ProRule" id="PRU00047"/>
    </source>
</evidence>
<evidence type="ECO:0000256" key="4">
    <source>
        <dbReference type="SAM" id="MobiDB-lite"/>
    </source>
</evidence>
<evidence type="ECO:0000305" key="5"/>
<sequence length="666" mass="74005">MGQTKSKIKSKYASYLSFIKILLKRGGVKVSTKNLIKLFQIIEQFCPWFPEQGTLDLKDWKRIGKELKQAGRKGNIIPLTVWNDWAIIKAALEPFQTEEDSISVSDAPGSGIIDCNEKTRKKSQKETESLHCEYVAEPVMAQSTQNVDYNQLQEVIYPETLKLEGKGPELVGPSESKPRGTSPLPAGQVPVTLQPQKQVKENKTQPPVAYQYWPPAELQYRPPPESQYGYPGMPPAPQGRAPYPQPPTRRLNPTAPPSRQGSELHEIIDKSRKEGDTEAWQFPVTLEPMPPGEGAQEGEPPTVEARYKSFSIKILKDMKEGVKQYGPNSPYMRTLLDSIAHGHRLIPYDWEILAKSSLSPSQFLQFKTWWIDGVQEQVRRNRAANPPVNIDADQLLGIGQNWSTISQQALMQNEAIEQVRAICLRAWEKIQDPGSTCPSFNTVRQGSKEPYPDFVARLQDVAQKSIADEKARKVIVELMAYENANPECQSAIKPLKGKVPAGSDVISEYVKACDGIGGAMHKAMLMAQAITGVVLGGQVRTFGGKCYNCGQIGHLKKNCPVLNKQNITIQATTTGREPPDLCPRCKKGKHWASQCRSKFDKNGQPLSGNEQRGQPQAPQQTGAFPIQPFVPQGFQGQQPPLSQVFQGISQLPQYNNCPPPQVAVQQ</sequence>